<comment type="function">
    <text evidence="4">Extracellular dipeptidyl-peptidase which removes N-terminal dipeptides sequentially from polypeptides having unsubstituted N-termini provided that the penultimate residue is proline. Contributes to pathogenicity.</text>
</comment>
<comment type="catalytic activity">
    <reaction evidence="3">
        <text>Release of an N-terminal dipeptide, Xaa-Yaa-|-Zaa-, from a polypeptide, preferentially when Yaa is Pro, provided Zaa is neither Pro nor hydroxyproline.</text>
        <dbReference type="EC" id="3.4.14.5"/>
    </reaction>
</comment>
<comment type="subcellular location">
    <subcellularLocation>
        <location evidence="1">Secreted</location>
    </subcellularLocation>
</comment>
<comment type="similarity">
    <text evidence="5">Belongs to the peptidase S9B family.</text>
</comment>
<protein>
    <recommendedName>
        <fullName>Dipeptidyl peptidase 4</fullName>
        <ecNumber>3.4.14.5</ecNumber>
    </recommendedName>
    <alternativeName>
        <fullName>Dipeptidyl peptidase IV</fullName>
        <shortName>DPP IV</shortName>
        <shortName>DppIV</shortName>
    </alternativeName>
</protein>
<organism>
    <name type="scientific">Arthroderma otae</name>
    <name type="common">Microsporum canis</name>
    <dbReference type="NCBI Taxonomy" id="63405"/>
    <lineage>
        <taxon>Eukaryota</taxon>
        <taxon>Fungi</taxon>
        <taxon>Dikarya</taxon>
        <taxon>Ascomycota</taxon>
        <taxon>Pezizomycotina</taxon>
        <taxon>Eurotiomycetes</taxon>
        <taxon>Eurotiomycetidae</taxon>
        <taxon>Onygenales</taxon>
        <taxon>Arthrodermataceae</taxon>
        <taxon>Microsporum</taxon>
    </lineage>
</organism>
<reference key="1">
    <citation type="journal article" date="2007" name="FEMS Microbiol. Lett.">
        <title>RNA silencing in the dermatophyte Microsporum canis.</title>
        <authorList>
            <person name="Vermout S."/>
            <person name="Tabart J."/>
            <person name="Baldo A."/>
            <person name="Monod M."/>
            <person name="Losson B."/>
            <person name="Mignon B."/>
        </authorList>
    </citation>
    <scope>NUCLEOTIDE SEQUENCE [GENOMIC DNA]</scope>
    <scope>FUNCTION</scope>
</reference>
<evidence type="ECO:0000250" key="1"/>
<evidence type="ECO:0000255" key="2"/>
<evidence type="ECO:0000255" key="3">
    <source>
        <dbReference type="PROSITE-ProRule" id="PRU10084"/>
    </source>
</evidence>
<evidence type="ECO:0000269" key="4">
    <source>
    </source>
</evidence>
<evidence type="ECO:0000305" key="5"/>
<dbReference type="EC" id="3.4.14.5"/>
<dbReference type="EMBL" id="DQ286524">
    <property type="protein sequence ID" value="ABB89928.1"/>
    <property type="molecule type" value="Genomic_DNA"/>
</dbReference>
<dbReference type="SMR" id="A0S5V9"/>
<dbReference type="ESTHER" id="artot-dpp4">
    <property type="family name" value="DPP4N_Peptidase_S9"/>
</dbReference>
<dbReference type="MEROPS" id="S09.008"/>
<dbReference type="GlyCosmos" id="A0S5V9">
    <property type="glycosylation" value="4 sites, No reported glycans"/>
</dbReference>
<dbReference type="GO" id="GO:0005576">
    <property type="term" value="C:extracellular region"/>
    <property type="evidence" value="ECO:0007669"/>
    <property type="project" value="UniProtKB-SubCell"/>
</dbReference>
<dbReference type="GO" id="GO:0005886">
    <property type="term" value="C:plasma membrane"/>
    <property type="evidence" value="ECO:0007669"/>
    <property type="project" value="TreeGrafter"/>
</dbReference>
<dbReference type="GO" id="GO:0004177">
    <property type="term" value="F:aminopeptidase activity"/>
    <property type="evidence" value="ECO:0007669"/>
    <property type="project" value="UniProtKB-KW"/>
</dbReference>
<dbReference type="GO" id="GO:0008239">
    <property type="term" value="F:dipeptidyl-peptidase activity"/>
    <property type="evidence" value="ECO:0007669"/>
    <property type="project" value="UniProtKB-EC"/>
</dbReference>
<dbReference type="GO" id="GO:0004252">
    <property type="term" value="F:serine-type endopeptidase activity"/>
    <property type="evidence" value="ECO:0007669"/>
    <property type="project" value="InterPro"/>
</dbReference>
<dbReference type="GO" id="GO:0006508">
    <property type="term" value="P:proteolysis"/>
    <property type="evidence" value="ECO:0007669"/>
    <property type="project" value="UniProtKB-KW"/>
</dbReference>
<dbReference type="FunFam" id="3.40.50.1820:FF:000003">
    <property type="entry name" value="Dipeptidyl peptidase 4"/>
    <property type="match status" value="1"/>
</dbReference>
<dbReference type="FunFam" id="2.140.10.30:FF:000003">
    <property type="entry name" value="Probable dipeptidyl peptidase 4"/>
    <property type="match status" value="1"/>
</dbReference>
<dbReference type="Gene3D" id="3.40.50.1820">
    <property type="entry name" value="alpha/beta hydrolase"/>
    <property type="match status" value="1"/>
</dbReference>
<dbReference type="Gene3D" id="2.140.10.30">
    <property type="entry name" value="Dipeptidylpeptidase IV, N-terminal domain"/>
    <property type="match status" value="1"/>
</dbReference>
<dbReference type="InterPro" id="IPR029058">
    <property type="entry name" value="AB_hydrolase_fold"/>
</dbReference>
<dbReference type="InterPro" id="IPR002471">
    <property type="entry name" value="Pept_S9_AS"/>
</dbReference>
<dbReference type="InterPro" id="IPR001375">
    <property type="entry name" value="Peptidase_S9_cat"/>
</dbReference>
<dbReference type="InterPro" id="IPR002469">
    <property type="entry name" value="Peptidase_S9B_N"/>
</dbReference>
<dbReference type="InterPro" id="IPR050278">
    <property type="entry name" value="Serine_Prot_S9B/DPPIV"/>
</dbReference>
<dbReference type="PANTHER" id="PTHR11731:SF162">
    <property type="entry name" value="DIPEPTIDYL PEPTIDASE 4-RELATED"/>
    <property type="match status" value="1"/>
</dbReference>
<dbReference type="PANTHER" id="PTHR11731">
    <property type="entry name" value="PROTEASE FAMILY S9B,C DIPEPTIDYL-PEPTIDASE IV-RELATED"/>
    <property type="match status" value="1"/>
</dbReference>
<dbReference type="Pfam" id="PF00930">
    <property type="entry name" value="DPPIV_N"/>
    <property type="match status" value="1"/>
</dbReference>
<dbReference type="Pfam" id="PF00326">
    <property type="entry name" value="Peptidase_S9"/>
    <property type="match status" value="1"/>
</dbReference>
<dbReference type="SUPFAM" id="SSF53474">
    <property type="entry name" value="alpha/beta-Hydrolases"/>
    <property type="match status" value="1"/>
</dbReference>
<dbReference type="SUPFAM" id="SSF82171">
    <property type="entry name" value="DPP6 N-terminal domain-like"/>
    <property type="match status" value="1"/>
</dbReference>
<dbReference type="PROSITE" id="PS00708">
    <property type="entry name" value="PRO_ENDOPEP_SER"/>
    <property type="match status" value="1"/>
</dbReference>
<proteinExistence type="inferred from homology"/>
<name>DPP4_ARTOT</name>
<gene>
    <name type="primary">DPP4</name>
</gene>
<sequence length="775" mass="87917">MKFLSLLLLVGVAQAIVPPREPRPPTGGGKKLLTYKECVPRATLAPRSTSLAWINSDEDGQYISQSDDGALILQNIVTNTNKTLVAADKVPKGFYDYWIKPDLTAVLWATNYTKQYRHSYFANYFILDIEKGSLTPLAEDQSGDIQYAQWNPVDNSIAYVRGNDLYVWNSGKTKRITENGGPDTFNGVPDWVYEEEIFGDRFALWFSPDGEYLAYLRFNETGVPTYTVPYYKNKQKIAPAYPRELEIRYPKVSAKNPTVQFHLLNLASSEETSIPVTAFPEDDLIIGEVAWLSSGHDSVAFRAFNRVQDTEKIVNVKVGSKESKVIRERDGTDGWIDNLLSMSYIGKVNGKEYYVDISDASGWAHLYLYPVDGGKEIALTKGEWEVTAILKVDTKSKLIYFTSTKFHSTTRHVYSVSYDTKVMTPLVNDREAAYYSASFSAKGGYYILSYQGPNVPYQELYSVKDKKKPIKTITSNDALIEKLKDYKLPKITFFEIKLPSGESLNVMQRLPPNFNPFKKYPVLFTPYGGPGAQEVSQAWKALDFKAYITSDPELEYVTWTVDNRGTGFKGRKFRSTVTKRLGFLEPQDQVFAAKEILKNRWADKDHVGMWGWSYGGFLTAKTMETDSGVFTFGMSTAPVSDFRLYDSMYTERYMKTVELNADGYSETAVHKTDGFKNLKGHYLIQHGTGDDNVHFQNSAVLSNTLMNGGVTPDRLTTQWFTDSDHGVRYDNDSTFQYKQLTKMVYDQKQPRPQTTPLHQWSKRVLAALFGEEAEE</sequence>
<keyword id="KW-0031">Aminopeptidase</keyword>
<keyword id="KW-0325">Glycoprotein</keyword>
<keyword id="KW-0378">Hydrolase</keyword>
<keyword id="KW-0645">Protease</keyword>
<keyword id="KW-0964">Secreted</keyword>
<keyword id="KW-0720">Serine protease</keyword>
<keyword id="KW-0732">Signal</keyword>
<keyword id="KW-0843">Virulence</keyword>
<accession>A0S5V9</accession>
<feature type="signal peptide" evidence="2">
    <location>
        <begin position="1"/>
        <end position="15"/>
    </location>
</feature>
<feature type="chain" id="PRO_5000171326" description="Dipeptidyl peptidase 4">
    <location>
        <begin position="16"/>
        <end position="775"/>
    </location>
</feature>
<feature type="active site" description="Charge relay system" evidence="3">
    <location>
        <position position="613"/>
    </location>
</feature>
<feature type="active site" description="Charge relay system" evidence="3">
    <location>
        <position position="690"/>
    </location>
</feature>
<feature type="active site" description="Charge relay system" evidence="3">
    <location>
        <position position="725"/>
    </location>
</feature>
<feature type="glycosylation site" description="N-linked (GlcNAc...) asparagine" evidence="2">
    <location>
        <position position="81"/>
    </location>
</feature>
<feature type="glycosylation site" description="N-linked (GlcNAc...) asparagine" evidence="2">
    <location>
        <position position="111"/>
    </location>
</feature>
<feature type="glycosylation site" description="N-linked (GlcNAc...) asparagine" evidence="2">
    <location>
        <position position="219"/>
    </location>
</feature>
<feature type="glycosylation site" description="N-linked (GlcNAc...) asparagine" evidence="2">
    <location>
        <position position="731"/>
    </location>
</feature>